<evidence type="ECO:0000255" key="1">
    <source>
        <dbReference type="HAMAP-Rule" id="MF_00583"/>
    </source>
</evidence>
<accession>P9WKE2</accession>
<accession>L0T8D7</accession>
<accession>P65232</accession>
<accession>P96383</accession>
<gene>
    <name evidence="1" type="primary">prs</name>
    <name type="synonym">prsA</name>
    <name type="ordered locus">MT1045</name>
</gene>
<dbReference type="EC" id="2.7.6.1" evidence="1"/>
<dbReference type="EMBL" id="AE000516">
    <property type="protein sequence ID" value="AAK45296.1"/>
    <property type="molecule type" value="Genomic_DNA"/>
</dbReference>
<dbReference type="PIR" id="D70622">
    <property type="entry name" value="D70622"/>
</dbReference>
<dbReference type="RefSeq" id="WP_003405263.1">
    <property type="nucleotide sequence ID" value="NZ_KK341227.1"/>
</dbReference>
<dbReference type="SMR" id="P9WKE2"/>
<dbReference type="KEGG" id="mtc:MT1045"/>
<dbReference type="PATRIC" id="fig|83331.31.peg.1121"/>
<dbReference type="HOGENOM" id="CLU_033546_2_0_11"/>
<dbReference type="UniPathway" id="UPA00087">
    <property type="reaction ID" value="UER00172"/>
</dbReference>
<dbReference type="Proteomes" id="UP000001020">
    <property type="component" value="Chromosome"/>
</dbReference>
<dbReference type="GO" id="GO:0005737">
    <property type="term" value="C:cytoplasm"/>
    <property type="evidence" value="ECO:0007669"/>
    <property type="project" value="UniProtKB-SubCell"/>
</dbReference>
<dbReference type="GO" id="GO:0002189">
    <property type="term" value="C:ribose phosphate diphosphokinase complex"/>
    <property type="evidence" value="ECO:0007669"/>
    <property type="project" value="TreeGrafter"/>
</dbReference>
<dbReference type="GO" id="GO:0005524">
    <property type="term" value="F:ATP binding"/>
    <property type="evidence" value="ECO:0007669"/>
    <property type="project" value="UniProtKB-KW"/>
</dbReference>
<dbReference type="GO" id="GO:0016301">
    <property type="term" value="F:kinase activity"/>
    <property type="evidence" value="ECO:0007669"/>
    <property type="project" value="UniProtKB-KW"/>
</dbReference>
<dbReference type="GO" id="GO:0000287">
    <property type="term" value="F:magnesium ion binding"/>
    <property type="evidence" value="ECO:0007669"/>
    <property type="project" value="UniProtKB-UniRule"/>
</dbReference>
<dbReference type="GO" id="GO:0004749">
    <property type="term" value="F:ribose phosphate diphosphokinase activity"/>
    <property type="evidence" value="ECO:0007669"/>
    <property type="project" value="UniProtKB-UniRule"/>
</dbReference>
<dbReference type="GO" id="GO:0006015">
    <property type="term" value="P:5-phosphoribose 1-diphosphate biosynthetic process"/>
    <property type="evidence" value="ECO:0007669"/>
    <property type="project" value="UniProtKB-UniRule"/>
</dbReference>
<dbReference type="GO" id="GO:0006164">
    <property type="term" value="P:purine nucleotide biosynthetic process"/>
    <property type="evidence" value="ECO:0007669"/>
    <property type="project" value="TreeGrafter"/>
</dbReference>
<dbReference type="GO" id="GO:0009156">
    <property type="term" value="P:ribonucleoside monophosphate biosynthetic process"/>
    <property type="evidence" value="ECO:0007669"/>
    <property type="project" value="InterPro"/>
</dbReference>
<dbReference type="CDD" id="cd06223">
    <property type="entry name" value="PRTases_typeI"/>
    <property type="match status" value="1"/>
</dbReference>
<dbReference type="FunFam" id="3.40.50.2020:FF:000007">
    <property type="entry name" value="Ribose-phosphate pyrophosphokinase"/>
    <property type="match status" value="1"/>
</dbReference>
<dbReference type="Gene3D" id="3.40.50.2020">
    <property type="match status" value="2"/>
</dbReference>
<dbReference type="HAMAP" id="MF_00583_B">
    <property type="entry name" value="RibP_PPkinase_B"/>
    <property type="match status" value="1"/>
</dbReference>
<dbReference type="InterPro" id="IPR000842">
    <property type="entry name" value="PRib_PP_synth_CS"/>
</dbReference>
<dbReference type="InterPro" id="IPR029099">
    <property type="entry name" value="Pribosyltran_N"/>
</dbReference>
<dbReference type="InterPro" id="IPR000836">
    <property type="entry name" value="PRibTrfase_dom"/>
</dbReference>
<dbReference type="InterPro" id="IPR029057">
    <property type="entry name" value="PRTase-like"/>
</dbReference>
<dbReference type="InterPro" id="IPR005946">
    <property type="entry name" value="Rib-P_diPkinase"/>
</dbReference>
<dbReference type="InterPro" id="IPR037515">
    <property type="entry name" value="Rib-P_diPkinase_bac"/>
</dbReference>
<dbReference type="NCBIfam" id="NF002320">
    <property type="entry name" value="PRK01259.1"/>
    <property type="match status" value="1"/>
</dbReference>
<dbReference type="NCBIfam" id="NF002844">
    <property type="entry name" value="PRK03092.1"/>
    <property type="match status" value="1"/>
</dbReference>
<dbReference type="NCBIfam" id="TIGR01251">
    <property type="entry name" value="ribP_PPkin"/>
    <property type="match status" value="1"/>
</dbReference>
<dbReference type="PANTHER" id="PTHR10210">
    <property type="entry name" value="RIBOSE-PHOSPHATE DIPHOSPHOKINASE FAMILY MEMBER"/>
    <property type="match status" value="1"/>
</dbReference>
<dbReference type="PANTHER" id="PTHR10210:SF41">
    <property type="entry name" value="RIBOSE-PHOSPHATE PYROPHOSPHOKINASE 1, CHLOROPLASTIC"/>
    <property type="match status" value="1"/>
</dbReference>
<dbReference type="Pfam" id="PF14572">
    <property type="entry name" value="Pribosyl_synth"/>
    <property type="match status" value="1"/>
</dbReference>
<dbReference type="Pfam" id="PF13793">
    <property type="entry name" value="Pribosyltran_N"/>
    <property type="match status" value="1"/>
</dbReference>
<dbReference type="SMART" id="SM01400">
    <property type="entry name" value="Pribosyltran_N"/>
    <property type="match status" value="1"/>
</dbReference>
<dbReference type="SUPFAM" id="SSF53271">
    <property type="entry name" value="PRTase-like"/>
    <property type="match status" value="1"/>
</dbReference>
<dbReference type="PROSITE" id="PS00114">
    <property type="entry name" value="PRPP_SYNTHASE"/>
    <property type="match status" value="1"/>
</dbReference>
<reference key="1">
    <citation type="journal article" date="2002" name="J. Bacteriol.">
        <title>Whole-genome comparison of Mycobacterium tuberculosis clinical and laboratory strains.</title>
        <authorList>
            <person name="Fleischmann R.D."/>
            <person name="Alland D."/>
            <person name="Eisen J.A."/>
            <person name="Carpenter L."/>
            <person name="White O."/>
            <person name="Peterson J.D."/>
            <person name="DeBoy R.T."/>
            <person name="Dodson R.J."/>
            <person name="Gwinn M.L."/>
            <person name="Haft D.H."/>
            <person name="Hickey E.K."/>
            <person name="Kolonay J.F."/>
            <person name="Nelson W.C."/>
            <person name="Umayam L.A."/>
            <person name="Ermolaeva M.D."/>
            <person name="Salzberg S.L."/>
            <person name="Delcher A."/>
            <person name="Utterback T.R."/>
            <person name="Weidman J.F."/>
            <person name="Khouri H.M."/>
            <person name="Gill J."/>
            <person name="Mikula A."/>
            <person name="Bishai W."/>
            <person name="Jacobs W.R. Jr."/>
            <person name="Venter J.C."/>
            <person name="Fraser C.M."/>
        </authorList>
    </citation>
    <scope>NUCLEOTIDE SEQUENCE [LARGE SCALE GENOMIC DNA]</scope>
    <source>
        <strain>CDC 1551 / Oshkosh</strain>
    </source>
</reference>
<keyword id="KW-0067">ATP-binding</keyword>
<keyword id="KW-0963">Cytoplasm</keyword>
<keyword id="KW-0418">Kinase</keyword>
<keyword id="KW-0460">Magnesium</keyword>
<keyword id="KW-0479">Metal-binding</keyword>
<keyword id="KW-0545">Nucleotide biosynthesis</keyword>
<keyword id="KW-0547">Nucleotide-binding</keyword>
<keyword id="KW-1185">Reference proteome</keyword>
<keyword id="KW-0808">Transferase</keyword>
<feature type="chain" id="PRO_0000427669" description="Ribose-phosphate pyrophosphokinase">
    <location>
        <begin position="1"/>
        <end position="326"/>
    </location>
</feature>
<feature type="active site" evidence="1">
    <location>
        <position position="202"/>
    </location>
</feature>
<feature type="binding site" evidence="1">
    <location>
        <begin position="45"/>
        <end position="47"/>
    </location>
    <ligand>
        <name>ATP</name>
        <dbReference type="ChEBI" id="CHEBI:30616"/>
    </ligand>
</feature>
<feature type="binding site" evidence="1">
    <location>
        <begin position="104"/>
        <end position="105"/>
    </location>
    <ligand>
        <name>ATP</name>
        <dbReference type="ChEBI" id="CHEBI:30616"/>
    </ligand>
</feature>
<feature type="binding site" evidence="1">
    <location>
        <position position="138"/>
    </location>
    <ligand>
        <name>Mg(2+)</name>
        <dbReference type="ChEBI" id="CHEBI:18420"/>
        <label>1</label>
    </ligand>
</feature>
<feature type="binding site" evidence="1">
    <location>
        <position position="178"/>
    </location>
    <ligand>
        <name>Mg(2+)</name>
        <dbReference type="ChEBI" id="CHEBI:18420"/>
        <label>2</label>
    </ligand>
</feature>
<feature type="binding site" evidence="1">
    <location>
        <position position="204"/>
    </location>
    <ligand>
        <name>D-ribose 5-phosphate</name>
        <dbReference type="ChEBI" id="CHEBI:78346"/>
    </ligand>
</feature>
<feature type="binding site" evidence="1">
    <location>
        <position position="230"/>
    </location>
    <ligand>
        <name>D-ribose 5-phosphate</name>
        <dbReference type="ChEBI" id="CHEBI:78346"/>
    </ligand>
</feature>
<feature type="binding site" evidence="1">
    <location>
        <begin position="234"/>
        <end position="238"/>
    </location>
    <ligand>
        <name>D-ribose 5-phosphate</name>
        <dbReference type="ChEBI" id="CHEBI:78346"/>
    </ligand>
</feature>
<organism>
    <name type="scientific">Mycobacterium tuberculosis (strain CDC 1551 / Oshkosh)</name>
    <dbReference type="NCBI Taxonomy" id="83331"/>
    <lineage>
        <taxon>Bacteria</taxon>
        <taxon>Bacillati</taxon>
        <taxon>Actinomycetota</taxon>
        <taxon>Actinomycetes</taxon>
        <taxon>Mycobacteriales</taxon>
        <taxon>Mycobacteriaceae</taxon>
        <taxon>Mycobacterium</taxon>
        <taxon>Mycobacterium tuberculosis complex</taxon>
    </lineage>
</organism>
<sequence>MSHDWTDNRKNLMLFAGRAHPELAEQVAKELDVHVTSQDAREFANGEIFVRFHESVRGCDAFVLQSCPAPVNRWLMEQLIMIDALKRGSAKRITAVMPFYPYARQDKKHRGREPISARLIADLLKTAGADRIVTVDLHTDQIQGFFDGPVDHMRGQNLLTGYIRDNYPDGNMVVVSPDSGRVRIAEKWADALGGVPLAFIHKTRDPRVPNQVVSNRVVGDVAGRTCVLIDDMIDTGGTIAGAVALLHNDGAGDVIIAATHGVLSDPAAQRLASCGAREVIVTNTLPIGEDKRFPQLTVLSIAPLLASTIRAVFENGSVTGLFDGDA</sequence>
<protein>
    <recommendedName>
        <fullName evidence="1">Ribose-phosphate pyrophosphokinase</fullName>
        <shortName evidence="1">RPPK</shortName>
        <ecNumber evidence="1">2.7.6.1</ecNumber>
    </recommendedName>
    <alternativeName>
        <fullName evidence="1">5-phospho-D-ribosyl alpha-1-diphosphate synthase</fullName>
    </alternativeName>
    <alternativeName>
        <fullName evidence="1">Phosphoribosyl diphosphate synthase</fullName>
    </alternativeName>
    <alternativeName>
        <fullName evidence="1">Phosphoribosyl pyrophosphate synthase</fullName>
        <shortName evidence="1">P-Rib-PP synthase</shortName>
        <shortName evidence="1">PRPP synthase</shortName>
        <shortName evidence="1">PRPPase</shortName>
    </alternativeName>
</protein>
<name>KPRS_MYCTO</name>
<proteinExistence type="inferred from homology"/>
<comment type="function">
    <text evidence="1">Involved in the biosynthesis of the central metabolite phospho-alpha-D-ribosyl-1-pyrophosphate (PRPP) via the transfer of pyrophosphoryl group from ATP to 1-hydroxyl of ribose-5-phosphate (Rib-5-P).</text>
</comment>
<comment type="catalytic activity">
    <reaction evidence="1">
        <text>D-ribose 5-phosphate + ATP = 5-phospho-alpha-D-ribose 1-diphosphate + AMP + H(+)</text>
        <dbReference type="Rhea" id="RHEA:15609"/>
        <dbReference type="ChEBI" id="CHEBI:15378"/>
        <dbReference type="ChEBI" id="CHEBI:30616"/>
        <dbReference type="ChEBI" id="CHEBI:58017"/>
        <dbReference type="ChEBI" id="CHEBI:78346"/>
        <dbReference type="ChEBI" id="CHEBI:456215"/>
        <dbReference type="EC" id="2.7.6.1"/>
    </reaction>
</comment>
<comment type="cofactor">
    <cofactor evidence="1">
        <name>Mg(2+)</name>
        <dbReference type="ChEBI" id="CHEBI:18420"/>
    </cofactor>
    <text evidence="1">Binds 2 Mg(2+) ions per subunit.</text>
</comment>
<comment type="pathway">
    <text evidence="1">Metabolic intermediate biosynthesis; 5-phospho-alpha-D-ribose 1-diphosphate biosynthesis; 5-phospho-alpha-D-ribose 1-diphosphate from D-ribose 5-phosphate (route I): step 1/1.</text>
</comment>
<comment type="subunit">
    <text evidence="1">Homohexamer.</text>
</comment>
<comment type="subcellular location">
    <subcellularLocation>
        <location evidence="1">Cytoplasm</location>
    </subcellularLocation>
</comment>
<comment type="similarity">
    <text evidence="1">Belongs to the ribose-phosphate pyrophosphokinase family. Class I subfamily.</text>
</comment>